<feature type="chain" id="PRO_1000051886" description="Small ribosomal subunit protein uS13">
    <location>
        <begin position="1"/>
        <end position="122"/>
    </location>
</feature>
<feature type="region of interest" description="Disordered" evidence="2">
    <location>
        <begin position="99"/>
        <end position="122"/>
    </location>
</feature>
<evidence type="ECO:0000255" key="1">
    <source>
        <dbReference type="HAMAP-Rule" id="MF_01315"/>
    </source>
</evidence>
<evidence type="ECO:0000256" key="2">
    <source>
        <dbReference type="SAM" id="MobiDB-lite"/>
    </source>
</evidence>
<evidence type="ECO:0000305" key="3"/>
<reference key="1">
    <citation type="submission" date="2007-04" db="EMBL/GenBank/DDBJ databases">
        <title>Complete sequence of chromosome of Rhodobacter sphaeroides ATCC 17025.</title>
        <authorList>
            <consortium name="US DOE Joint Genome Institute"/>
            <person name="Copeland A."/>
            <person name="Lucas S."/>
            <person name="Lapidus A."/>
            <person name="Barry K."/>
            <person name="Detter J.C."/>
            <person name="Glavina del Rio T."/>
            <person name="Hammon N."/>
            <person name="Israni S."/>
            <person name="Dalin E."/>
            <person name="Tice H."/>
            <person name="Pitluck S."/>
            <person name="Chertkov O."/>
            <person name="Brettin T."/>
            <person name="Bruce D."/>
            <person name="Han C."/>
            <person name="Schmutz J."/>
            <person name="Larimer F."/>
            <person name="Land M."/>
            <person name="Hauser L."/>
            <person name="Kyrpides N."/>
            <person name="Kim E."/>
            <person name="Richardson P."/>
            <person name="Mackenzie C."/>
            <person name="Choudhary M."/>
            <person name="Donohue T.J."/>
            <person name="Kaplan S."/>
        </authorList>
    </citation>
    <scope>NUCLEOTIDE SEQUENCE [LARGE SCALE GENOMIC DNA]</scope>
    <source>
        <strain>ATCC 17025 / ATH 2.4.3</strain>
    </source>
</reference>
<name>RS13_CERS5</name>
<accession>A4WVI6</accession>
<keyword id="KW-0687">Ribonucleoprotein</keyword>
<keyword id="KW-0689">Ribosomal protein</keyword>
<keyword id="KW-0694">RNA-binding</keyword>
<keyword id="KW-0699">rRNA-binding</keyword>
<keyword id="KW-0820">tRNA-binding</keyword>
<gene>
    <name evidence="1" type="primary">rpsM</name>
    <name type="ordered locus">Rsph17025_2512</name>
</gene>
<dbReference type="EMBL" id="CP000661">
    <property type="protein sequence ID" value="ABP71400.1"/>
    <property type="molecule type" value="Genomic_DNA"/>
</dbReference>
<dbReference type="SMR" id="A4WVI6"/>
<dbReference type="STRING" id="349102.Rsph17025_2512"/>
<dbReference type="KEGG" id="rsq:Rsph17025_2512"/>
<dbReference type="eggNOG" id="COG0099">
    <property type="taxonomic scope" value="Bacteria"/>
</dbReference>
<dbReference type="HOGENOM" id="CLU_103849_1_2_5"/>
<dbReference type="BioCyc" id="RSPH349102:G1G8M-2590-MONOMER"/>
<dbReference type="GO" id="GO:0005829">
    <property type="term" value="C:cytosol"/>
    <property type="evidence" value="ECO:0007669"/>
    <property type="project" value="TreeGrafter"/>
</dbReference>
<dbReference type="GO" id="GO:0015935">
    <property type="term" value="C:small ribosomal subunit"/>
    <property type="evidence" value="ECO:0007669"/>
    <property type="project" value="TreeGrafter"/>
</dbReference>
<dbReference type="GO" id="GO:0019843">
    <property type="term" value="F:rRNA binding"/>
    <property type="evidence" value="ECO:0007669"/>
    <property type="project" value="UniProtKB-UniRule"/>
</dbReference>
<dbReference type="GO" id="GO:0003735">
    <property type="term" value="F:structural constituent of ribosome"/>
    <property type="evidence" value="ECO:0007669"/>
    <property type="project" value="InterPro"/>
</dbReference>
<dbReference type="GO" id="GO:0000049">
    <property type="term" value="F:tRNA binding"/>
    <property type="evidence" value="ECO:0007669"/>
    <property type="project" value="UniProtKB-UniRule"/>
</dbReference>
<dbReference type="GO" id="GO:0006412">
    <property type="term" value="P:translation"/>
    <property type="evidence" value="ECO:0007669"/>
    <property type="project" value="UniProtKB-UniRule"/>
</dbReference>
<dbReference type="FunFam" id="1.10.8.50:FF:000001">
    <property type="entry name" value="30S ribosomal protein S13"/>
    <property type="match status" value="1"/>
</dbReference>
<dbReference type="FunFam" id="4.10.910.10:FF:000001">
    <property type="entry name" value="30S ribosomal protein S13"/>
    <property type="match status" value="1"/>
</dbReference>
<dbReference type="Gene3D" id="1.10.8.50">
    <property type="match status" value="1"/>
</dbReference>
<dbReference type="Gene3D" id="4.10.910.10">
    <property type="entry name" value="30s ribosomal protein s13, domain 2"/>
    <property type="match status" value="1"/>
</dbReference>
<dbReference type="HAMAP" id="MF_01315">
    <property type="entry name" value="Ribosomal_uS13"/>
    <property type="match status" value="1"/>
</dbReference>
<dbReference type="InterPro" id="IPR027437">
    <property type="entry name" value="Rbsml_uS13_C"/>
</dbReference>
<dbReference type="InterPro" id="IPR001892">
    <property type="entry name" value="Ribosomal_uS13"/>
</dbReference>
<dbReference type="InterPro" id="IPR010979">
    <property type="entry name" value="Ribosomal_uS13-like_H2TH"/>
</dbReference>
<dbReference type="InterPro" id="IPR019980">
    <property type="entry name" value="Ribosomal_uS13_bac-type"/>
</dbReference>
<dbReference type="InterPro" id="IPR018269">
    <property type="entry name" value="Ribosomal_uS13_CS"/>
</dbReference>
<dbReference type="NCBIfam" id="TIGR03631">
    <property type="entry name" value="uS13_bact"/>
    <property type="match status" value="1"/>
</dbReference>
<dbReference type="PANTHER" id="PTHR10871">
    <property type="entry name" value="30S RIBOSOMAL PROTEIN S13/40S RIBOSOMAL PROTEIN S18"/>
    <property type="match status" value="1"/>
</dbReference>
<dbReference type="PANTHER" id="PTHR10871:SF1">
    <property type="entry name" value="SMALL RIBOSOMAL SUBUNIT PROTEIN US13M"/>
    <property type="match status" value="1"/>
</dbReference>
<dbReference type="Pfam" id="PF00416">
    <property type="entry name" value="Ribosomal_S13"/>
    <property type="match status" value="1"/>
</dbReference>
<dbReference type="PIRSF" id="PIRSF002134">
    <property type="entry name" value="Ribosomal_S13"/>
    <property type="match status" value="1"/>
</dbReference>
<dbReference type="SUPFAM" id="SSF46946">
    <property type="entry name" value="S13-like H2TH domain"/>
    <property type="match status" value="1"/>
</dbReference>
<dbReference type="PROSITE" id="PS00646">
    <property type="entry name" value="RIBOSOMAL_S13_1"/>
    <property type="match status" value="1"/>
</dbReference>
<dbReference type="PROSITE" id="PS50159">
    <property type="entry name" value="RIBOSOMAL_S13_2"/>
    <property type="match status" value="1"/>
</dbReference>
<sequence>MARIAGVNIPTAKRVPIALTYIHGIGNHVAEQICDAVGIDRARRVNQLSDAEVLAIREYIDANVTVEGDLRRETSMNIKRLMDLGCYRGLRHRRGLPVRGQRTHTNARTRKGPAKAIAGKKK</sequence>
<protein>
    <recommendedName>
        <fullName evidence="1">Small ribosomal subunit protein uS13</fullName>
    </recommendedName>
    <alternativeName>
        <fullName evidence="3">30S ribosomal protein S13</fullName>
    </alternativeName>
</protein>
<comment type="function">
    <text evidence="1">Located at the top of the head of the 30S subunit, it contacts several helices of the 16S rRNA. In the 70S ribosome it contacts the 23S rRNA (bridge B1a) and protein L5 of the 50S subunit (bridge B1b), connecting the 2 subunits; these bridges are implicated in subunit movement. Contacts the tRNAs in the A and P-sites.</text>
</comment>
<comment type="subunit">
    <text evidence="1">Part of the 30S ribosomal subunit. Forms a loose heterodimer with protein S19. Forms two bridges to the 50S subunit in the 70S ribosome.</text>
</comment>
<comment type="similarity">
    <text evidence="1">Belongs to the universal ribosomal protein uS13 family.</text>
</comment>
<proteinExistence type="inferred from homology"/>
<organism>
    <name type="scientific">Cereibacter sphaeroides (strain ATCC 17025 / ATH 2.4.3)</name>
    <name type="common">Rhodobacter sphaeroides</name>
    <dbReference type="NCBI Taxonomy" id="349102"/>
    <lineage>
        <taxon>Bacteria</taxon>
        <taxon>Pseudomonadati</taxon>
        <taxon>Pseudomonadota</taxon>
        <taxon>Alphaproteobacteria</taxon>
        <taxon>Rhodobacterales</taxon>
        <taxon>Paracoccaceae</taxon>
        <taxon>Cereibacter</taxon>
    </lineage>
</organism>